<feature type="chain" id="PRO_1000059766" description="ATP-dependent 6-phosphofructokinase">
    <location>
        <begin position="1"/>
        <end position="321"/>
    </location>
</feature>
<feature type="active site" description="Proton acceptor" evidence="1">
    <location>
        <position position="129"/>
    </location>
</feature>
<feature type="binding site" evidence="1">
    <location>
        <position position="12"/>
    </location>
    <ligand>
        <name>ATP</name>
        <dbReference type="ChEBI" id="CHEBI:30616"/>
    </ligand>
</feature>
<feature type="binding site" evidence="1">
    <location>
        <begin position="22"/>
        <end position="26"/>
    </location>
    <ligand>
        <name>ADP</name>
        <dbReference type="ChEBI" id="CHEBI:456216"/>
        <note>allosteric activator; ligand shared between dimeric partners</note>
    </ligand>
</feature>
<feature type="binding site" evidence="1">
    <location>
        <begin position="55"/>
        <end position="60"/>
    </location>
    <ligand>
        <name>ADP</name>
        <dbReference type="ChEBI" id="CHEBI:456216"/>
        <note>allosteric activator; ligand shared between dimeric partners</note>
    </ligand>
</feature>
<feature type="binding site" evidence="1">
    <location>
        <begin position="73"/>
        <end position="74"/>
    </location>
    <ligand>
        <name>ATP</name>
        <dbReference type="ChEBI" id="CHEBI:30616"/>
    </ligand>
</feature>
<feature type="binding site" evidence="1">
    <location>
        <begin position="103"/>
        <end position="106"/>
    </location>
    <ligand>
        <name>ATP</name>
        <dbReference type="ChEBI" id="CHEBI:30616"/>
    </ligand>
</feature>
<feature type="binding site" evidence="1">
    <location>
        <position position="104"/>
    </location>
    <ligand>
        <name>Mg(2+)</name>
        <dbReference type="ChEBI" id="CHEBI:18420"/>
        <note>catalytic</note>
    </ligand>
</feature>
<feature type="binding site" description="in other chain" evidence="1">
    <location>
        <begin position="127"/>
        <end position="129"/>
    </location>
    <ligand>
        <name>substrate</name>
        <note>ligand shared between dimeric partners</note>
    </ligand>
</feature>
<feature type="binding site" description="in other chain" evidence="1">
    <location>
        <position position="156"/>
    </location>
    <ligand>
        <name>ADP</name>
        <dbReference type="ChEBI" id="CHEBI:456216"/>
        <note>allosteric activator; ligand shared between dimeric partners</note>
    </ligand>
</feature>
<feature type="binding site" evidence="1">
    <location>
        <position position="164"/>
    </location>
    <ligand>
        <name>substrate</name>
        <note>ligand shared between dimeric partners</note>
    </ligand>
</feature>
<feature type="binding site" description="in other chain" evidence="1">
    <location>
        <begin position="171"/>
        <end position="173"/>
    </location>
    <ligand>
        <name>substrate</name>
        <note>ligand shared between dimeric partners</note>
    </ligand>
</feature>
<feature type="binding site" description="in other chain" evidence="1">
    <location>
        <begin position="187"/>
        <end position="189"/>
    </location>
    <ligand>
        <name>ADP</name>
        <dbReference type="ChEBI" id="CHEBI:456216"/>
        <note>allosteric activator; ligand shared between dimeric partners</note>
    </ligand>
</feature>
<feature type="binding site" description="in other chain" evidence="1">
    <location>
        <position position="213"/>
    </location>
    <ligand>
        <name>ADP</name>
        <dbReference type="ChEBI" id="CHEBI:456216"/>
        <note>allosteric activator; ligand shared between dimeric partners</note>
    </ligand>
</feature>
<feature type="binding site" description="in other chain" evidence="1">
    <location>
        <begin position="215"/>
        <end position="217"/>
    </location>
    <ligand>
        <name>ADP</name>
        <dbReference type="ChEBI" id="CHEBI:456216"/>
        <note>allosteric activator; ligand shared between dimeric partners</note>
    </ligand>
</feature>
<feature type="binding site" description="in other chain" evidence="1">
    <location>
        <position position="224"/>
    </location>
    <ligand>
        <name>substrate</name>
        <note>ligand shared between dimeric partners</note>
    </ligand>
</feature>
<feature type="binding site" evidence="1">
    <location>
        <position position="245"/>
    </location>
    <ligand>
        <name>substrate</name>
        <note>ligand shared between dimeric partners</note>
    </ligand>
</feature>
<feature type="binding site" description="in other chain" evidence="1">
    <location>
        <begin position="251"/>
        <end position="254"/>
    </location>
    <ligand>
        <name>substrate</name>
        <note>ligand shared between dimeric partners</note>
    </ligand>
</feature>
<keyword id="KW-0021">Allosteric enzyme</keyword>
<keyword id="KW-0067">ATP-binding</keyword>
<keyword id="KW-0963">Cytoplasm</keyword>
<keyword id="KW-0324">Glycolysis</keyword>
<keyword id="KW-0418">Kinase</keyword>
<keyword id="KW-0460">Magnesium</keyword>
<keyword id="KW-0479">Metal-binding</keyword>
<keyword id="KW-0547">Nucleotide-binding</keyword>
<keyword id="KW-0808">Transferase</keyword>
<protein>
    <recommendedName>
        <fullName evidence="1">ATP-dependent 6-phosphofructokinase</fullName>
        <shortName evidence="1">ATP-PFK</shortName>
        <shortName evidence="1">Phosphofructokinase</shortName>
        <ecNumber evidence="1">2.7.1.11</ecNumber>
    </recommendedName>
    <alternativeName>
        <fullName evidence="1">Phosphohexokinase</fullName>
    </alternativeName>
</protein>
<proteinExistence type="inferred from homology"/>
<reference key="1">
    <citation type="journal article" date="2007" name="Genome Biol.">
        <title>Characterization and modeling of the Haemophilus influenzae core and supragenomes based on the complete genomic sequences of Rd and 12 clinical nontypeable strains.</title>
        <authorList>
            <person name="Hogg J.S."/>
            <person name="Hu F.Z."/>
            <person name="Janto B."/>
            <person name="Boissy R."/>
            <person name="Hayes J."/>
            <person name="Keefe R."/>
            <person name="Post J.C."/>
            <person name="Ehrlich G.D."/>
        </authorList>
    </citation>
    <scope>NUCLEOTIDE SEQUENCE [LARGE SCALE GENOMIC DNA]</scope>
    <source>
        <strain>PittEE</strain>
    </source>
</reference>
<sequence length="321" mass="34922">MIKKIAVLTSGGDAPGMNAAIRGVVRSALAEGLEVFGIYDGYQGLYNNKIKQLNRYSVSDVINRGGTFLGSARFPEFKDPNIRAKCAEILRSHGIDALVVIGGDGSYMGAKLLTEEHSFPCVGLPGTIDNDVAGTDYTIGYQTALQTAVDAIDRLRDTSSSHQRISIVEIMGRHCSDLTISAGIAGGCEYIVASEIEFNREELIQQIERSIIRGKRHAIIAITELLTDVHSLAKEIEARVGHETRATVLGHIQRGGSPCAFDRILASRMGAYAVDLLLQGKGGYCVGIQNEQLVHHDIIDAINNMQRVFKADWLKVAKRLE</sequence>
<dbReference type="EC" id="2.7.1.11" evidence="1"/>
<dbReference type="EMBL" id="CP000671">
    <property type="protein sequence ID" value="ABQ98740.1"/>
    <property type="molecule type" value="Genomic_DNA"/>
</dbReference>
<dbReference type="SMR" id="A5UD89"/>
<dbReference type="KEGG" id="hip:CGSHiEE_07055"/>
<dbReference type="HOGENOM" id="CLU_020655_0_1_6"/>
<dbReference type="UniPathway" id="UPA00109">
    <property type="reaction ID" value="UER00182"/>
</dbReference>
<dbReference type="GO" id="GO:0005945">
    <property type="term" value="C:6-phosphofructokinase complex"/>
    <property type="evidence" value="ECO:0007669"/>
    <property type="project" value="TreeGrafter"/>
</dbReference>
<dbReference type="GO" id="GO:0003872">
    <property type="term" value="F:6-phosphofructokinase activity"/>
    <property type="evidence" value="ECO:0007669"/>
    <property type="project" value="UniProtKB-UniRule"/>
</dbReference>
<dbReference type="GO" id="GO:0016208">
    <property type="term" value="F:AMP binding"/>
    <property type="evidence" value="ECO:0007669"/>
    <property type="project" value="TreeGrafter"/>
</dbReference>
<dbReference type="GO" id="GO:0005524">
    <property type="term" value="F:ATP binding"/>
    <property type="evidence" value="ECO:0007669"/>
    <property type="project" value="UniProtKB-KW"/>
</dbReference>
<dbReference type="GO" id="GO:0070095">
    <property type="term" value="F:fructose-6-phosphate binding"/>
    <property type="evidence" value="ECO:0007669"/>
    <property type="project" value="TreeGrafter"/>
</dbReference>
<dbReference type="GO" id="GO:0042802">
    <property type="term" value="F:identical protein binding"/>
    <property type="evidence" value="ECO:0007669"/>
    <property type="project" value="TreeGrafter"/>
</dbReference>
<dbReference type="GO" id="GO:0046872">
    <property type="term" value="F:metal ion binding"/>
    <property type="evidence" value="ECO:0007669"/>
    <property type="project" value="UniProtKB-KW"/>
</dbReference>
<dbReference type="GO" id="GO:0048029">
    <property type="term" value="F:monosaccharide binding"/>
    <property type="evidence" value="ECO:0007669"/>
    <property type="project" value="TreeGrafter"/>
</dbReference>
<dbReference type="GO" id="GO:0061621">
    <property type="term" value="P:canonical glycolysis"/>
    <property type="evidence" value="ECO:0007669"/>
    <property type="project" value="TreeGrafter"/>
</dbReference>
<dbReference type="GO" id="GO:0030388">
    <property type="term" value="P:fructose 1,6-bisphosphate metabolic process"/>
    <property type="evidence" value="ECO:0007669"/>
    <property type="project" value="TreeGrafter"/>
</dbReference>
<dbReference type="GO" id="GO:0006002">
    <property type="term" value="P:fructose 6-phosphate metabolic process"/>
    <property type="evidence" value="ECO:0007669"/>
    <property type="project" value="InterPro"/>
</dbReference>
<dbReference type="CDD" id="cd00763">
    <property type="entry name" value="Bacterial_PFK"/>
    <property type="match status" value="1"/>
</dbReference>
<dbReference type="FunFam" id="3.40.50.450:FF:000001">
    <property type="entry name" value="ATP-dependent 6-phosphofructokinase"/>
    <property type="match status" value="1"/>
</dbReference>
<dbReference type="FunFam" id="3.40.50.460:FF:000002">
    <property type="entry name" value="ATP-dependent 6-phosphofructokinase"/>
    <property type="match status" value="1"/>
</dbReference>
<dbReference type="Gene3D" id="3.40.50.450">
    <property type="match status" value="1"/>
</dbReference>
<dbReference type="Gene3D" id="3.40.50.460">
    <property type="entry name" value="Phosphofructokinase domain"/>
    <property type="match status" value="1"/>
</dbReference>
<dbReference type="HAMAP" id="MF_00339">
    <property type="entry name" value="Phosphofructokinase_I_B1"/>
    <property type="match status" value="1"/>
</dbReference>
<dbReference type="InterPro" id="IPR022953">
    <property type="entry name" value="ATP_PFK"/>
</dbReference>
<dbReference type="InterPro" id="IPR012003">
    <property type="entry name" value="ATP_PFK_prok-type"/>
</dbReference>
<dbReference type="InterPro" id="IPR012828">
    <property type="entry name" value="PFKA_ATP_prok"/>
</dbReference>
<dbReference type="InterPro" id="IPR015912">
    <property type="entry name" value="Phosphofructokinase_CS"/>
</dbReference>
<dbReference type="InterPro" id="IPR000023">
    <property type="entry name" value="Phosphofructokinase_dom"/>
</dbReference>
<dbReference type="InterPro" id="IPR035966">
    <property type="entry name" value="PKF_sf"/>
</dbReference>
<dbReference type="NCBIfam" id="TIGR02482">
    <property type="entry name" value="PFKA_ATP"/>
    <property type="match status" value="1"/>
</dbReference>
<dbReference type="NCBIfam" id="NF002872">
    <property type="entry name" value="PRK03202.1"/>
    <property type="match status" value="1"/>
</dbReference>
<dbReference type="PANTHER" id="PTHR13697:SF4">
    <property type="entry name" value="ATP-DEPENDENT 6-PHOSPHOFRUCTOKINASE"/>
    <property type="match status" value="1"/>
</dbReference>
<dbReference type="PANTHER" id="PTHR13697">
    <property type="entry name" value="PHOSPHOFRUCTOKINASE"/>
    <property type="match status" value="1"/>
</dbReference>
<dbReference type="Pfam" id="PF00365">
    <property type="entry name" value="PFK"/>
    <property type="match status" value="1"/>
</dbReference>
<dbReference type="PIRSF" id="PIRSF000532">
    <property type="entry name" value="ATP_PFK_prok"/>
    <property type="match status" value="1"/>
</dbReference>
<dbReference type="PRINTS" id="PR00476">
    <property type="entry name" value="PHFRCTKINASE"/>
</dbReference>
<dbReference type="SUPFAM" id="SSF53784">
    <property type="entry name" value="Phosphofructokinase"/>
    <property type="match status" value="1"/>
</dbReference>
<dbReference type="PROSITE" id="PS00433">
    <property type="entry name" value="PHOSPHOFRUCTOKINASE"/>
    <property type="match status" value="1"/>
</dbReference>
<organism>
    <name type="scientific">Haemophilus influenzae (strain PittEE)</name>
    <dbReference type="NCBI Taxonomy" id="374930"/>
    <lineage>
        <taxon>Bacteria</taxon>
        <taxon>Pseudomonadati</taxon>
        <taxon>Pseudomonadota</taxon>
        <taxon>Gammaproteobacteria</taxon>
        <taxon>Pasteurellales</taxon>
        <taxon>Pasteurellaceae</taxon>
        <taxon>Haemophilus</taxon>
    </lineage>
</organism>
<comment type="function">
    <text evidence="1">Catalyzes the phosphorylation of D-fructose 6-phosphate to fructose 1,6-bisphosphate by ATP, the first committing step of glycolysis.</text>
</comment>
<comment type="catalytic activity">
    <reaction evidence="1">
        <text>beta-D-fructose 6-phosphate + ATP = beta-D-fructose 1,6-bisphosphate + ADP + H(+)</text>
        <dbReference type="Rhea" id="RHEA:16109"/>
        <dbReference type="ChEBI" id="CHEBI:15378"/>
        <dbReference type="ChEBI" id="CHEBI:30616"/>
        <dbReference type="ChEBI" id="CHEBI:32966"/>
        <dbReference type="ChEBI" id="CHEBI:57634"/>
        <dbReference type="ChEBI" id="CHEBI:456216"/>
        <dbReference type="EC" id="2.7.1.11"/>
    </reaction>
</comment>
<comment type="cofactor">
    <cofactor evidence="1">
        <name>Mg(2+)</name>
        <dbReference type="ChEBI" id="CHEBI:18420"/>
    </cofactor>
</comment>
<comment type="activity regulation">
    <text evidence="1">Allosterically activated by ADP and other diphosphonucleosides, and allosterically inhibited by phosphoenolpyruvate.</text>
</comment>
<comment type="pathway">
    <text evidence="1">Carbohydrate degradation; glycolysis; D-glyceraldehyde 3-phosphate and glycerone phosphate from D-glucose: step 3/4.</text>
</comment>
<comment type="subunit">
    <text evidence="1">Homotetramer.</text>
</comment>
<comment type="subcellular location">
    <subcellularLocation>
        <location evidence="1">Cytoplasm</location>
    </subcellularLocation>
</comment>
<comment type="similarity">
    <text evidence="1">Belongs to the phosphofructokinase type A (PFKA) family. ATP-dependent PFK group I subfamily. Prokaryotic clade 'B1' sub-subfamily.</text>
</comment>
<evidence type="ECO:0000255" key="1">
    <source>
        <dbReference type="HAMAP-Rule" id="MF_00339"/>
    </source>
</evidence>
<accession>A5UD89</accession>
<name>PFKA_HAEIE</name>
<gene>
    <name evidence="1" type="primary">pfkA</name>
    <name type="ordered locus">CGSHiEE_07055</name>
</gene>